<keyword id="KW-0472">Membrane</keyword>
<keyword id="KW-0812">Transmembrane</keyword>
<keyword id="KW-1133">Transmembrane helix</keyword>
<keyword id="KW-0926">Vacuole</keyword>
<comment type="function">
    <text evidence="1 2 6">Acts as a suppressor component of the dual wtf meiotic drive system, and can suppress but not confer meiotic drive by compatible poisons (PubMed:32032353). Wtf meiotic drive systems promote unequal transmission of alleles from the parental zygote to progeny spores by encoding a poison and an antidote from the same locus; the poison is trans-acting and forms toxic aggregates in all spores within an ascus, wherease the antidote is spore-specific and targets aggregates for degradation by the vacuole (By similarity). Meiotic drive by wtf systems therefore lead to poisoning of all progeny that do not inherit the dual poison/antidote allele, or express a compatible antidote (By similarity).</text>
</comment>
<comment type="subunit">
    <text evidence="1 3">Homomer (By similarity). Interacts with other proteins that exhibit high sequence similarity (By similarity).</text>
</comment>
<comment type="subcellular location">
    <subcellularLocation>
        <location evidence="1 4">Spore membrane</location>
        <topology evidence="4">Multi-pass membrane protein</topology>
    </subcellularLocation>
    <subcellularLocation>
        <location evidence="1 4">Vacuole membrane</location>
        <topology evidence="4">Multi-pass membrane protein</topology>
    </subcellularLocation>
</comment>
<comment type="similarity">
    <text evidence="8">Belongs to the WTF family.</text>
</comment>
<organism evidence="9">
    <name type="scientific">Schizosaccharomyces kambucha</name>
    <name type="common">Fission yeast</name>
    <dbReference type="NCBI Taxonomy" id="204045"/>
    <lineage>
        <taxon>Eukaryota</taxon>
        <taxon>Fungi</taxon>
        <taxon>Dikarya</taxon>
        <taxon>Ascomycota</taxon>
        <taxon>Taphrinomycotina</taxon>
        <taxon>Schizosaccharomycetes</taxon>
        <taxon>Schizosaccharomycetales</taxon>
        <taxon>Schizosaccharomycetaceae</taxon>
        <taxon>Schizosaccharomyces</taxon>
    </lineage>
</organism>
<name>WTF23_SCHKA</name>
<reference evidence="9" key="1">
    <citation type="journal article" date="2020" name="PLoS Genet.">
        <title>Dramatically diverse Schizosaccharomyces pombe wtf meiotic drivers all display high gamete-killing efficiency.</title>
        <authorList>
            <person name="Bravo Nunez M.A."/>
            <person name="Sabbarini I.M."/>
            <person name="Eickbush M.T."/>
            <person name="Liang Y."/>
            <person name="Lange J.J."/>
            <person name="Kent A.M."/>
            <person name="Zanders S.E."/>
        </authorList>
    </citation>
    <scope>NUCLEOTIDE SEQUENCE [GENOMIC DNA]</scope>
    <scope>FUNCTION</scope>
</reference>
<proteinExistence type="inferred from homology"/>
<protein>
    <recommendedName>
        <fullName evidence="7">Meiotic drive suppressor wtf23</fullName>
    </recommendedName>
</protein>
<accession>A0A482AU60</accession>
<sequence length="336" mass="37975">MKNNYTSLKSPIDEEDELKTGHEIDLEKGLLPEYDSEEEGALPPYSDHARVSNPPNTHRENHSSGTTDDSSPFLIKLLISFTPIVLLNALAVWYLKYKDAFFKNYGAAEWTLFGFWCLVCTLVLIILTYFYETWTKAVKVTVIFLAQCIKVTAVFLAQCVKGLFNIRREMMIIIWILWLIICCILFGCVKDGRLNFNKALICSTCTISAVLFLIVSSVCIPIWTLWRALSGMLQVLGIHGIIAVLVNGSMSLFGKHFGWRGYEIEGFVLFFTSNALFLYEMERPGVLKRMRNTTGNVIGYICGGIEDAFRRIKNAFRGANDNNNIPLGEMDVEGEV</sequence>
<evidence type="ECO:0000250" key="1">
    <source>
        <dbReference type="UniProtKB" id="A0A218N034"/>
    </source>
</evidence>
<evidence type="ECO:0000250" key="2">
    <source>
        <dbReference type="UniProtKB" id="A0A482ATU4"/>
    </source>
</evidence>
<evidence type="ECO:0000250" key="3">
    <source>
        <dbReference type="UniProtKB" id="O74420"/>
    </source>
</evidence>
<evidence type="ECO:0000255" key="4"/>
<evidence type="ECO:0000256" key="5">
    <source>
        <dbReference type="SAM" id="MobiDB-lite"/>
    </source>
</evidence>
<evidence type="ECO:0000269" key="6">
    <source>
    </source>
</evidence>
<evidence type="ECO:0000303" key="7">
    <source>
    </source>
</evidence>
<evidence type="ECO:0000305" key="8"/>
<evidence type="ECO:0000312" key="9">
    <source>
        <dbReference type="EMBL" id="QBL54511.1"/>
    </source>
</evidence>
<feature type="chain" id="PRO_0000452266" description="Meiotic drive suppressor wtf23">
    <location>
        <begin position="1"/>
        <end position="336"/>
    </location>
</feature>
<feature type="transmembrane region" description="Helical" evidence="4">
    <location>
        <begin position="73"/>
        <end position="93"/>
    </location>
</feature>
<feature type="transmembrane region" description="Helical" evidence="4">
    <location>
        <begin position="110"/>
        <end position="130"/>
    </location>
</feature>
<feature type="transmembrane region" description="Helical" evidence="4">
    <location>
        <begin position="140"/>
        <end position="160"/>
    </location>
</feature>
<feature type="transmembrane region" description="Helical" evidence="4">
    <location>
        <begin position="169"/>
        <end position="189"/>
    </location>
</feature>
<feature type="transmembrane region" description="Helical" evidence="4">
    <location>
        <begin position="206"/>
        <end position="226"/>
    </location>
</feature>
<feature type="transmembrane region" description="Helical" evidence="4">
    <location>
        <begin position="228"/>
        <end position="248"/>
    </location>
</feature>
<feature type="transmembrane region" description="Helical" evidence="4">
    <location>
        <begin position="261"/>
        <end position="281"/>
    </location>
</feature>
<feature type="region of interest" description="Disordered" evidence="5">
    <location>
        <begin position="1"/>
        <end position="21"/>
    </location>
</feature>
<feature type="region of interest" description="Disordered" evidence="5">
    <location>
        <begin position="35"/>
        <end position="68"/>
    </location>
</feature>
<dbReference type="EMBL" id="MH837449">
    <property type="protein sequence ID" value="QBL54511.1"/>
    <property type="molecule type" value="Genomic_DNA"/>
</dbReference>
<dbReference type="SMR" id="A0A482AU60"/>
<dbReference type="GO" id="GO:0005737">
    <property type="term" value="C:cytoplasm"/>
    <property type="evidence" value="ECO:0000305"/>
    <property type="project" value="UniProtKB"/>
</dbReference>
<dbReference type="GO" id="GO:0005774">
    <property type="term" value="C:vacuolar membrane"/>
    <property type="evidence" value="ECO:0007669"/>
    <property type="project" value="UniProtKB-SubCell"/>
</dbReference>
<dbReference type="GO" id="GO:0110134">
    <property type="term" value="P:meiotic drive"/>
    <property type="evidence" value="ECO:0000269"/>
    <property type="project" value="UniProtKB"/>
</dbReference>
<dbReference type="InterPro" id="IPR004982">
    <property type="entry name" value="WTF"/>
</dbReference>
<dbReference type="Pfam" id="PF03303">
    <property type="entry name" value="WTF"/>
    <property type="match status" value="1"/>
</dbReference>
<gene>
    <name evidence="9" type="primary">wtf23</name>
</gene>